<reference key="1">
    <citation type="journal article" date="1997" name="Science">
        <title>The complete genome sequence of Escherichia coli K-12.</title>
        <authorList>
            <person name="Blattner F.R."/>
            <person name="Plunkett G. III"/>
            <person name="Bloch C.A."/>
            <person name="Perna N.T."/>
            <person name="Burland V."/>
            <person name="Riley M."/>
            <person name="Collado-Vides J."/>
            <person name="Glasner J.D."/>
            <person name="Rode C.K."/>
            <person name="Mayhew G.F."/>
            <person name="Gregor J."/>
            <person name="Davis N.W."/>
            <person name="Kirkpatrick H.A."/>
            <person name="Goeden M.A."/>
            <person name="Rose D.J."/>
            <person name="Mau B."/>
            <person name="Shao Y."/>
        </authorList>
    </citation>
    <scope>NUCLEOTIDE SEQUENCE [LARGE SCALE GENOMIC DNA]</scope>
    <source>
        <strain>K12 / MG1655 / ATCC 47076</strain>
    </source>
</reference>
<reference key="2">
    <citation type="journal article" date="2006" name="Mol. Syst. Biol.">
        <title>Highly accurate genome sequences of Escherichia coli K-12 strains MG1655 and W3110.</title>
        <authorList>
            <person name="Hayashi K."/>
            <person name="Morooka N."/>
            <person name="Yamamoto Y."/>
            <person name="Fujita K."/>
            <person name="Isono K."/>
            <person name="Choi S."/>
            <person name="Ohtsubo E."/>
            <person name="Baba T."/>
            <person name="Wanner B.L."/>
            <person name="Mori H."/>
            <person name="Horiuchi T."/>
        </authorList>
    </citation>
    <scope>NUCLEOTIDE SEQUENCE [LARGE SCALE GENOMIC DNA]</scope>
    <source>
        <strain>K12 / W3110 / ATCC 27325 / DSM 5911</strain>
    </source>
</reference>
<reference key="3">
    <citation type="journal article" date="1994" name="Biosci. Biotechnol. Biochem.">
        <title>Analysis of products of the Escherichia coli genomic genes and regulation of their expressions: an applicable procedure for genomic analysis of other microorganisms.</title>
        <authorList>
            <person name="Talukder A.A."/>
            <person name="Yanai S."/>
            <person name="Yamada M."/>
        </authorList>
    </citation>
    <scope>NUCLEOTIDE SEQUENCE [GENOMIC DNA] OF 1-74</scope>
    <source>
        <strain>K12 / W3110 / ATCC 27325 / DSM 5911</strain>
    </source>
</reference>
<reference key="4">
    <citation type="submission" date="1997-01" db="EMBL/GenBank/DDBJ databases">
        <title>Sequence of minutes 4-25 of Escherichia coli.</title>
        <authorList>
            <person name="Chung E."/>
            <person name="Allen E."/>
            <person name="Araujo R."/>
            <person name="Aparicio A.M."/>
            <person name="Davis K."/>
            <person name="Duncan M."/>
            <person name="Federspiel N."/>
            <person name="Hyman R."/>
            <person name="Kalman S."/>
            <person name="Komp C."/>
            <person name="Kurdi O."/>
            <person name="Lew H."/>
            <person name="Lin D."/>
            <person name="Namath A."/>
            <person name="Oefner P."/>
            <person name="Roberts D."/>
            <person name="Schramm S."/>
            <person name="Davis R.W."/>
        </authorList>
    </citation>
    <scope>NUCLEOTIDE SEQUENCE [LARGE SCALE GENOMIC DNA] OF 137-197</scope>
    <source>
        <strain>K12 / MG1655 / ATCC 47076</strain>
    </source>
</reference>
<comment type="interaction">
    <interactant intactId="EBI-561028">
        <id>P52037</id>
    </interactant>
    <interactant intactId="EBI-542856">
        <id>P0A9P0</id>
        <label>lpdA</label>
    </interactant>
    <organismsDiffer>false</organismsDiffer>
    <experiments>2</experiments>
</comment>
<comment type="similarity">
    <text evidence="3">Belongs to the short-chain dehydrogenases/reductases (SDR) family.</text>
</comment>
<name>YGFF_ECOLI</name>
<keyword id="KW-0560">Oxidoreductase</keyword>
<keyword id="KW-1185">Reference proteome</keyword>
<proteinExistence type="evidence at protein level"/>
<protein>
    <recommendedName>
        <fullName>Uncharacterized oxidoreductase YgfF</fullName>
        <ecNumber>1.-.-.-</ecNumber>
    </recommendedName>
</protein>
<sequence>MAIALVTGGSRGIGRATALLLAQEGYTVAVNYQQNLHAAQEVMNLITQAGGKAFVLQADISDENQVVAMFTAIDQHDEPLAALVNNAGILFTQCTVENLTAERINRVLSTNVTGYFLCCREAVKRMALKNGGSGGAIVNVSSVASRLGSPGEYVDYAASKGAIDTLTTGLSLEVAAQGIRVNCVRPGFIYTEMHASGGEPGRVDRVKSNIPMQRGGQAEEVAQAIVWLLSDKASYVTGSFIDLAGGK</sequence>
<organism>
    <name type="scientific">Escherichia coli (strain K12)</name>
    <dbReference type="NCBI Taxonomy" id="83333"/>
    <lineage>
        <taxon>Bacteria</taxon>
        <taxon>Pseudomonadati</taxon>
        <taxon>Pseudomonadota</taxon>
        <taxon>Gammaproteobacteria</taxon>
        <taxon>Enterobacterales</taxon>
        <taxon>Enterobacteriaceae</taxon>
        <taxon>Escherichia</taxon>
    </lineage>
</organism>
<evidence type="ECO:0000250" key="1"/>
<evidence type="ECO:0000255" key="2">
    <source>
        <dbReference type="PROSITE-ProRule" id="PRU10001"/>
    </source>
</evidence>
<evidence type="ECO:0000305" key="3"/>
<dbReference type="EC" id="1.-.-.-"/>
<dbReference type="EMBL" id="U28377">
    <property type="protein sequence ID" value="AAA69070.1"/>
    <property type="molecule type" value="Genomic_DNA"/>
</dbReference>
<dbReference type="EMBL" id="U28375">
    <property type="protein sequence ID" value="AAA83083.1"/>
    <property type="molecule type" value="Genomic_DNA"/>
</dbReference>
<dbReference type="EMBL" id="U00096">
    <property type="protein sequence ID" value="AAC75940.1"/>
    <property type="molecule type" value="Genomic_DNA"/>
</dbReference>
<dbReference type="EMBL" id="AP009048">
    <property type="protein sequence ID" value="BAE76967.1"/>
    <property type="molecule type" value="Genomic_DNA"/>
</dbReference>
<dbReference type="EMBL" id="D21144">
    <property type="protein sequence ID" value="BAA04680.1"/>
    <property type="molecule type" value="Genomic_DNA"/>
</dbReference>
<dbReference type="EMBL" id="U83189">
    <property type="protein sequence ID" value="AAB40290.1"/>
    <property type="molecule type" value="Genomic_DNA"/>
</dbReference>
<dbReference type="PIR" id="F65074">
    <property type="entry name" value="F65074"/>
</dbReference>
<dbReference type="RefSeq" id="NP_417378.1">
    <property type="nucleotide sequence ID" value="NC_000913.3"/>
</dbReference>
<dbReference type="RefSeq" id="WP_000951964.1">
    <property type="nucleotide sequence ID" value="NZ_SSUV01000019.1"/>
</dbReference>
<dbReference type="SMR" id="P52037"/>
<dbReference type="BioGRID" id="4260859">
    <property type="interactions" value="4"/>
</dbReference>
<dbReference type="DIP" id="DIP-12165N"/>
<dbReference type="FunCoup" id="P52037">
    <property type="interactions" value="66"/>
</dbReference>
<dbReference type="IntAct" id="P52037">
    <property type="interactions" value="3"/>
</dbReference>
<dbReference type="STRING" id="511145.b2902"/>
<dbReference type="jPOST" id="P52037"/>
<dbReference type="PaxDb" id="511145-b2902"/>
<dbReference type="EnsemblBacteria" id="AAC75940">
    <property type="protein sequence ID" value="AAC75940"/>
    <property type="gene ID" value="b2902"/>
</dbReference>
<dbReference type="GeneID" id="947373"/>
<dbReference type="KEGG" id="ecj:JW2870"/>
<dbReference type="KEGG" id="eco:b2902"/>
<dbReference type="KEGG" id="ecoc:C3026_15910"/>
<dbReference type="PATRIC" id="fig|1411691.4.peg.3830"/>
<dbReference type="EchoBASE" id="EB2798"/>
<dbReference type="eggNOG" id="COG1028">
    <property type="taxonomic scope" value="Bacteria"/>
</dbReference>
<dbReference type="HOGENOM" id="CLU_010194_1_3_6"/>
<dbReference type="InParanoid" id="P52037"/>
<dbReference type="OMA" id="GYRICIN"/>
<dbReference type="OrthoDB" id="20590at2"/>
<dbReference type="PhylomeDB" id="P52037"/>
<dbReference type="BioCyc" id="EcoCyc:G7514-MONOMER"/>
<dbReference type="PRO" id="PR:P52037"/>
<dbReference type="Proteomes" id="UP000000625">
    <property type="component" value="Chromosome"/>
</dbReference>
<dbReference type="GO" id="GO:0016614">
    <property type="term" value="F:oxidoreductase activity, acting on CH-OH group of donors"/>
    <property type="evidence" value="ECO:0007669"/>
    <property type="project" value="UniProtKB-ARBA"/>
</dbReference>
<dbReference type="CDD" id="cd05233">
    <property type="entry name" value="SDR_c"/>
    <property type="match status" value="1"/>
</dbReference>
<dbReference type="FunFam" id="3.40.50.720:FF:000173">
    <property type="entry name" value="3-oxoacyl-[acyl-carrier protein] reductase"/>
    <property type="match status" value="1"/>
</dbReference>
<dbReference type="Gene3D" id="3.40.50.720">
    <property type="entry name" value="NAD(P)-binding Rossmann-like Domain"/>
    <property type="match status" value="1"/>
</dbReference>
<dbReference type="InterPro" id="IPR036291">
    <property type="entry name" value="NAD(P)-bd_dom_sf"/>
</dbReference>
<dbReference type="InterPro" id="IPR020904">
    <property type="entry name" value="Sc_DH/Rdtase_CS"/>
</dbReference>
<dbReference type="InterPro" id="IPR002347">
    <property type="entry name" value="SDR_fam"/>
</dbReference>
<dbReference type="NCBIfam" id="NF004777">
    <property type="entry name" value="PRK06123.1"/>
    <property type="match status" value="1"/>
</dbReference>
<dbReference type="NCBIfam" id="NF007273">
    <property type="entry name" value="PRK09730.1"/>
    <property type="match status" value="1"/>
</dbReference>
<dbReference type="PANTHER" id="PTHR48107">
    <property type="entry name" value="NADPH-DEPENDENT ALDEHYDE REDUCTASE-LIKE PROTEIN, CHLOROPLASTIC-RELATED"/>
    <property type="match status" value="1"/>
</dbReference>
<dbReference type="PANTHER" id="PTHR48107:SF7">
    <property type="entry name" value="RE15974P"/>
    <property type="match status" value="1"/>
</dbReference>
<dbReference type="Pfam" id="PF13561">
    <property type="entry name" value="adh_short_C2"/>
    <property type="match status" value="1"/>
</dbReference>
<dbReference type="PRINTS" id="PR00081">
    <property type="entry name" value="GDHRDH"/>
</dbReference>
<dbReference type="PRINTS" id="PR00080">
    <property type="entry name" value="SDRFAMILY"/>
</dbReference>
<dbReference type="SUPFAM" id="SSF51735">
    <property type="entry name" value="NAD(P)-binding Rossmann-fold domains"/>
    <property type="match status" value="1"/>
</dbReference>
<dbReference type="PROSITE" id="PS00061">
    <property type="entry name" value="ADH_SHORT"/>
    <property type="match status" value="1"/>
</dbReference>
<feature type="chain" id="PRO_0000054836" description="Uncharacterized oxidoreductase YgfF">
    <location>
        <begin position="1"/>
        <end position="247"/>
    </location>
</feature>
<feature type="active site" description="Proton acceptor" evidence="2">
    <location>
        <position position="156"/>
    </location>
</feature>
<feature type="binding site" evidence="1">
    <location>
        <begin position="4"/>
        <end position="28"/>
    </location>
    <ligand>
        <name>NADP(+)</name>
        <dbReference type="ChEBI" id="CHEBI:58349"/>
    </ligand>
</feature>
<feature type="binding site" evidence="1">
    <location>
        <position position="142"/>
    </location>
    <ligand>
        <name>substrate</name>
    </ligand>
</feature>
<accession>P52037</accession>
<accession>P77138</accession>
<accession>Q2M9T9</accession>
<accession>Q46830</accession>
<gene>
    <name type="primary">ygfF</name>
    <name type="synonym">yqfD</name>
    <name type="ordered locus">b2902</name>
    <name type="ordered locus">JW2870</name>
</gene>